<comment type="function">
    <text evidence="1">Catalyzes the conversion of 4-hydroxy-tetrahydrodipicolinate (HTPA) to tetrahydrodipicolinate.</text>
</comment>
<comment type="catalytic activity">
    <reaction evidence="1">
        <text>(S)-2,3,4,5-tetrahydrodipicolinate + NAD(+) + H2O = (2S,4S)-4-hydroxy-2,3,4,5-tetrahydrodipicolinate + NADH + H(+)</text>
        <dbReference type="Rhea" id="RHEA:35323"/>
        <dbReference type="ChEBI" id="CHEBI:15377"/>
        <dbReference type="ChEBI" id="CHEBI:15378"/>
        <dbReference type="ChEBI" id="CHEBI:16845"/>
        <dbReference type="ChEBI" id="CHEBI:57540"/>
        <dbReference type="ChEBI" id="CHEBI:57945"/>
        <dbReference type="ChEBI" id="CHEBI:67139"/>
        <dbReference type="EC" id="1.17.1.8"/>
    </reaction>
</comment>
<comment type="catalytic activity">
    <reaction evidence="1">
        <text>(S)-2,3,4,5-tetrahydrodipicolinate + NADP(+) + H2O = (2S,4S)-4-hydroxy-2,3,4,5-tetrahydrodipicolinate + NADPH + H(+)</text>
        <dbReference type="Rhea" id="RHEA:35331"/>
        <dbReference type="ChEBI" id="CHEBI:15377"/>
        <dbReference type="ChEBI" id="CHEBI:15378"/>
        <dbReference type="ChEBI" id="CHEBI:16845"/>
        <dbReference type="ChEBI" id="CHEBI:57783"/>
        <dbReference type="ChEBI" id="CHEBI:58349"/>
        <dbReference type="ChEBI" id="CHEBI:67139"/>
        <dbReference type="EC" id="1.17.1.8"/>
    </reaction>
</comment>
<comment type="pathway">
    <text evidence="1">Amino-acid biosynthesis; L-lysine biosynthesis via DAP pathway; (S)-tetrahydrodipicolinate from L-aspartate: step 4/4.</text>
</comment>
<comment type="subcellular location">
    <subcellularLocation>
        <location evidence="1">Cytoplasm</location>
    </subcellularLocation>
</comment>
<comment type="similarity">
    <text evidence="1">Belongs to the DapB family.</text>
</comment>
<comment type="caution">
    <text evidence="2">Was originally thought to be a dihydrodipicolinate reductase (DHDPR), catalyzing the conversion of dihydrodipicolinate to tetrahydrodipicolinate. However, it was shown in E.coli that the substrate of the enzymatic reaction is not dihydrodipicolinate (DHDP) but in fact (2S,4S)-4-hydroxy-2,3,4,5-tetrahydrodipicolinic acid (HTPA), the product released by the DapA-catalyzed reaction.</text>
</comment>
<accession>B9KY70</accession>
<feature type="chain" id="PRO_1000189762" description="4-hydroxy-tetrahydrodipicolinate reductase">
    <location>
        <begin position="1"/>
        <end position="258"/>
    </location>
</feature>
<feature type="active site" description="Proton donor/acceptor" evidence="1">
    <location>
        <position position="149"/>
    </location>
</feature>
<feature type="active site" description="Proton donor" evidence="1">
    <location>
        <position position="153"/>
    </location>
</feature>
<feature type="binding site" evidence="1">
    <location>
        <begin position="8"/>
        <end position="13"/>
    </location>
    <ligand>
        <name>NAD(+)</name>
        <dbReference type="ChEBI" id="CHEBI:57540"/>
    </ligand>
</feature>
<feature type="binding site" evidence="1">
    <location>
        <begin position="93"/>
        <end position="95"/>
    </location>
    <ligand>
        <name>NAD(+)</name>
        <dbReference type="ChEBI" id="CHEBI:57540"/>
    </ligand>
</feature>
<feature type="binding site" evidence="1">
    <location>
        <begin position="117"/>
        <end position="120"/>
    </location>
    <ligand>
        <name>NAD(+)</name>
        <dbReference type="ChEBI" id="CHEBI:57540"/>
    </ligand>
</feature>
<feature type="binding site" evidence="1">
    <location>
        <position position="150"/>
    </location>
    <ligand>
        <name>(S)-2,3,4,5-tetrahydrodipicolinate</name>
        <dbReference type="ChEBI" id="CHEBI:16845"/>
    </ligand>
</feature>
<feature type="binding site" evidence="1">
    <location>
        <begin position="159"/>
        <end position="160"/>
    </location>
    <ligand>
        <name>(S)-2,3,4,5-tetrahydrodipicolinate</name>
        <dbReference type="ChEBI" id="CHEBI:16845"/>
    </ligand>
</feature>
<proteinExistence type="inferred from homology"/>
<protein>
    <recommendedName>
        <fullName evidence="1">4-hydroxy-tetrahydrodipicolinate reductase</fullName>
        <shortName evidence="1">HTPA reductase</shortName>
        <ecNumber evidence="1">1.17.1.8</ecNumber>
    </recommendedName>
</protein>
<organism>
    <name type="scientific">Thermomicrobium roseum (strain ATCC 27502 / DSM 5159 / P-2)</name>
    <dbReference type="NCBI Taxonomy" id="309801"/>
    <lineage>
        <taxon>Bacteria</taxon>
        <taxon>Pseudomonadati</taxon>
        <taxon>Thermomicrobiota</taxon>
        <taxon>Thermomicrobia</taxon>
        <taxon>Thermomicrobiales</taxon>
        <taxon>Thermomicrobiaceae</taxon>
        <taxon>Thermomicrobium</taxon>
    </lineage>
</organism>
<evidence type="ECO:0000255" key="1">
    <source>
        <dbReference type="HAMAP-Rule" id="MF_00102"/>
    </source>
</evidence>
<evidence type="ECO:0000305" key="2"/>
<name>DAPB_THERP</name>
<gene>
    <name evidence="1" type="primary">dapB</name>
    <name type="ordered locus">trd_0413</name>
</gene>
<sequence length="258" mass="27218">MLRLALTGVTGRMGRAVLELAASAPDIQLVCGLIRPARDPHEVAAQLPAPLALTSRVAELVQGADVVVDFSHPAVTVAVAEAAAHAGIPLVSGTTGLSEHDQAVILRAAQHVPVVQAANFSLGIALLHWLLPELVARLPTWDVELIERHHRHKRDAPSGTALALARTLLAAREPAPSPLVYGRGPGTAPRQPGEVGIHAVRAGGEVGRHTVLLATDDEAIEVTHWVQSRRAYAQGALEAARRLIGRPPGLYSLQDLVT</sequence>
<keyword id="KW-0028">Amino-acid biosynthesis</keyword>
<keyword id="KW-0963">Cytoplasm</keyword>
<keyword id="KW-0220">Diaminopimelate biosynthesis</keyword>
<keyword id="KW-0457">Lysine biosynthesis</keyword>
<keyword id="KW-0520">NAD</keyword>
<keyword id="KW-0521">NADP</keyword>
<keyword id="KW-0560">Oxidoreductase</keyword>
<keyword id="KW-1185">Reference proteome</keyword>
<reference key="1">
    <citation type="journal article" date="2009" name="PLoS ONE">
        <title>Complete genome sequence of the aerobic CO-oxidizing thermophile Thermomicrobium roseum.</title>
        <authorList>
            <person name="Wu D."/>
            <person name="Raymond J."/>
            <person name="Wu M."/>
            <person name="Chatterji S."/>
            <person name="Ren Q."/>
            <person name="Graham J.E."/>
            <person name="Bryant D.A."/>
            <person name="Robb F."/>
            <person name="Colman A."/>
            <person name="Tallon L.J."/>
            <person name="Badger J.H."/>
            <person name="Madupu R."/>
            <person name="Ward N.L."/>
            <person name="Eisen J.A."/>
        </authorList>
    </citation>
    <scope>NUCLEOTIDE SEQUENCE [LARGE SCALE GENOMIC DNA]</scope>
    <source>
        <strain>ATCC 27502 / DSM 5159 / P-2</strain>
    </source>
</reference>
<dbReference type="EC" id="1.17.1.8" evidence="1"/>
<dbReference type="EMBL" id="CP001275">
    <property type="protein sequence ID" value="ACM06161.1"/>
    <property type="molecule type" value="Genomic_DNA"/>
</dbReference>
<dbReference type="RefSeq" id="WP_012641820.1">
    <property type="nucleotide sequence ID" value="NC_011959.1"/>
</dbReference>
<dbReference type="SMR" id="B9KY70"/>
<dbReference type="STRING" id="309801.trd_0413"/>
<dbReference type="KEGG" id="tro:trd_0413"/>
<dbReference type="eggNOG" id="COG0289">
    <property type="taxonomic scope" value="Bacteria"/>
</dbReference>
<dbReference type="HOGENOM" id="CLU_047479_2_2_0"/>
<dbReference type="OrthoDB" id="9790352at2"/>
<dbReference type="UniPathway" id="UPA00034">
    <property type="reaction ID" value="UER00018"/>
</dbReference>
<dbReference type="Proteomes" id="UP000000447">
    <property type="component" value="Chromosome"/>
</dbReference>
<dbReference type="GO" id="GO:0005737">
    <property type="term" value="C:cytoplasm"/>
    <property type="evidence" value="ECO:0007669"/>
    <property type="project" value="UniProtKB-SubCell"/>
</dbReference>
<dbReference type="GO" id="GO:0008839">
    <property type="term" value="F:4-hydroxy-tetrahydrodipicolinate reductase"/>
    <property type="evidence" value="ECO:0007669"/>
    <property type="project" value="UniProtKB-EC"/>
</dbReference>
<dbReference type="GO" id="GO:0051287">
    <property type="term" value="F:NAD binding"/>
    <property type="evidence" value="ECO:0007669"/>
    <property type="project" value="UniProtKB-UniRule"/>
</dbReference>
<dbReference type="GO" id="GO:0050661">
    <property type="term" value="F:NADP binding"/>
    <property type="evidence" value="ECO:0007669"/>
    <property type="project" value="UniProtKB-UniRule"/>
</dbReference>
<dbReference type="GO" id="GO:0016726">
    <property type="term" value="F:oxidoreductase activity, acting on CH or CH2 groups, NAD or NADP as acceptor"/>
    <property type="evidence" value="ECO:0007669"/>
    <property type="project" value="UniProtKB-UniRule"/>
</dbReference>
<dbReference type="GO" id="GO:0019877">
    <property type="term" value="P:diaminopimelate biosynthetic process"/>
    <property type="evidence" value="ECO:0007669"/>
    <property type="project" value="UniProtKB-UniRule"/>
</dbReference>
<dbReference type="GO" id="GO:0009089">
    <property type="term" value="P:lysine biosynthetic process via diaminopimelate"/>
    <property type="evidence" value="ECO:0007669"/>
    <property type="project" value="UniProtKB-UniRule"/>
</dbReference>
<dbReference type="CDD" id="cd02274">
    <property type="entry name" value="DHDPR_N"/>
    <property type="match status" value="1"/>
</dbReference>
<dbReference type="Gene3D" id="3.30.360.10">
    <property type="entry name" value="Dihydrodipicolinate Reductase, domain 2"/>
    <property type="match status" value="1"/>
</dbReference>
<dbReference type="Gene3D" id="3.40.50.720">
    <property type="entry name" value="NAD(P)-binding Rossmann-like Domain"/>
    <property type="match status" value="1"/>
</dbReference>
<dbReference type="HAMAP" id="MF_00102">
    <property type="entry name" value="DapB"/>
    <property type="match status" value="1"/>
</dbReference>
<dbReference type="InterPro" id="IPR022663">
    <property type="entry name" value="DapB_C"/>
</dbReference>
<dbReference type="InterPro" id="IPR000846">
    <property type="entry name" value="DapB_N"/>
</dbReference>
<dbReference type="InterPro" id="IPR022664">
    <property type="entry name" value="DapB_N_CS"/>
</dbReference>
<dbReference type="InterPro" id="IPR023940">
    <property type="entry name" value="DHDPR_bac"/>
</dbReference>
<dbReference type="InterPro" id="IPR036291">
    <property type="entry name" value="NAD(P)-bd_dom_sf"/>
</dbReference>
<dbReference type="NCBIfam" id="TIGR00036">
    <property type="entry name" value="dapB"/>
    <property type="match status" value="1"/>
</dbReference>
<dbReference type="PANTHER" id="PTHR20836:SF0">
    <property type="entry name" value="4-HYDROXY-TETRAHYDRODIPICOLINATE REDUCTASE 1, CHLOROPLASTIC-RELATED"/>
    <property type="match status" value="1"/>
</dbReference>
<dbReference type="PANTHER" id="PTHR20836">
    <property type="entry name" value="DIHYDRODIPICOLINATE REDUCTASE"/>
    <property type="match status" value="1"/>
</dbReference>
<dbReference type="Pfam" id="PF05173">
    <property type="entry name" value="DapB_C"/>
    <property type="match status" value="1"/>
</dbReference>
<dbReference type="Pfam" id="PF01113">
    <property type="entry name" value="DapB_N"/>
    <property type="match status" value="1"/>
</dbReference>
<dbReference type="PIRSF" id="PIRSF000161">
    <property type="entry name" value="DHPR"/>
    <property type="match status" value="1"/>
</dbReference>
<dbReference type="SUPFAM" id="SSF55347">
    <property type="entry name" value="Glyceraldehyde-3-phosphate dehydrogenase-like, C-terminal domain"/>
    <property type="match status" value="1"/>
</dbReference>
<dbReference type="SUPFAM" id="SSF51735">
    <property type="entry name" value="NAD(P)-binding Rossmann-fold domains"/>
    <property type="match status" value="1"/>
</dbReference>
<dbReference type="PROSITE" id="PS01298">
    <property type="entry name" value="DAPB"/>
    <property type="match status" value="1"/>
</dbReference>